<organism evidence="6">
    <name type="scientific">Homo sapiens</name>
    <name type="common">Human</name>
    <dbReference type="NCBI Taxonomy" id="9606"/>
    <lineage>
        <taxon>Eukaryota</taxon>
        <taxon>Metazoa</taxon>
        <taxon>Chordata</taxon>
        <taxon>Craniata</taxon>
        <taxon>Vertebrata</taxon>
        <taxon>Euteleostomi</taxon>
        <taxon>Mammalia</taxon>
        <taxon>Eutheria</taxon>
        <taxon>Euarchontoglires</taxon>
        <taxon>Primates</taxon>
        <taxon>Haplorrhini</taxon>
        <taxon>Catarrhini</taxon>
        <taxon>Hominidae</taxon>
        <taxon>Homo</taxon>
    </lineage>
</organism>
<gene>
    <name type="primary">SLITRK6</name>
</gene>
<reference evidence="5" key="1">
    <citation type="journal article" date="2004" name="Nat. Genet.">
        <title>Complete sequencing and characterization of 21,243 full-length human cDNAs.</title>
        <authorList>
            <person name="Ota T."/>
            <person name="Suzuki Y."/>
            <person name="Nishikawa T."/>
            <person name="Otsuki T."/>
            <person name="Sugiyama T."/>
            <person name="Irie R."/>
            <person name="Wakamatsu A."/>
            <person name="Hayashi K."/>
            <person name="Sato H."/>
            <person name="Nagai K."/>
            <person name="Kimura K."/>
            <person name="Makita H."/>
            <person name="Sekine M."/>
            <person name="Obayashi M."/>
            <person name="Nishi T."/>
            <person name="Shibahara T."/>
            <person name="Tanaka T."/>
            <person name="Ishii S."/>
            <person name="Yamamoto J."/>
            <person name="Saito K."/>
            <person name="Kawai Y."/>
            <person name="Isono Y."/>
            <person name="Nakamura Y."/>
            <person name="Nagahari K."/>
            <person name="Murakami K."/>
            <person name="Yasuda T."/>
            <person name="Iwayanagi T."/>
            <person name="Wagatsuma M."/>
            <person name="Shiratori A."/>
            <person name="Sudo H."/>
            <person name="Hosoiri T."/>
            <person name="Kaku Y."/>
            <person name="Kodaira H."/>
            <person name="Kondo H."/>
            <person name="Sugawara M."/>
            <person name="Takahashi M."/>
            <person name="Kanda K."/>
            <person name="Yokoi T."/>
            <person name="Furuya T."/>
            <person name="Kikkawa E."/>
            <person name="Omura Y."/>
            <person name="Abe K."/>
            <person name="Kamihara K."/>
            <person name="Katsuta N."/>
            <person name="Sato K."/>
            <person name="Tanikawa M."/>
            <person name="Yamazaki M."/>
            <person name="Ninomiya K."/>
            <person name="Ishibashi T."/>
            <person name="Yamashita H."/>
            <person name="Murakawa K."/>
            <person name="Fujimori K."/>
            <person name="Tanai H."/>
            <person name="Kimata M."/>
            <person name="Watanabe M."/>
            <person name="Hiraoka S."/>
            <person name="Chiba Y."/>
            <person name="Ishida S."/>
            <person name="Ono Y."/>
            <person name="Takiguchi S."/>
            <person name="Watanabe S."/>
            <person name="Yosida M."/>
            <person name="Hotuta T."/>
            <person name="Kusano J."/>
            <person name="Kanehori K."/>
            <person name="Takahashi-Fujii A."/>
            <person name="Hara H."/>
            <person name="Tanase T.-O."/>
            <person name="Nomura Y."/>
            <person name="Togiya S."/>
            <person name="Komai F."/>
            <person name="Hara R."/>
            <person name="Takeuchi K."/>
            <person name="Arita M."/>
            <person name="Imose N."/>
            <person name="Musashino K."/>
            <person name="Yuuki H."/>
            <person name="Oshima A."/>
            <person name="Sasaki N."/>
            <person name="Aotsuka S."/>
            <person name="Yoshikawa Y."/>
            <person name="Matsunawa H."/>
            <person name="Ichihara T."/>
            <person name="Shiohata N."/>
            <person name="Sano S."/>
            <person name="Moriya S."/>
            <person name="Momiyama H."/>
            <person name="Satoh N."/>
            <person name="Takami S."/>
            <person name="Terashima Y."/>
            <person name="Suzuki O."/>
            <person name="Nakagawa S."/>
            <person name="Senoh A."/>
            <person name="Mizoguchi H."/>
            <person name="Goto Y."/>
            <person name="Shimizu F."/>
            <person name="Wakebe H."/>
            <person name="Hishigaki H."/>
            <person name="Watanabe T."/>
            <person name="Sugiyama A."/>
            <person name="Takemoto M."/>
            <person name="Kawakami B."/>
            <person name="Yamazaki M."/>
            <person name="Watanabe K."/>
            <person name="Kumagai A."/>
            <person name="Itakura S."/>
            <person name="Fukuzumi Y."/>
            <person name="Fujimori Y."/>
            <person name="Komiyama M."/>
            <person name="Tashiro H."/>
            <person name="Tanigami A."/>
            <person name="Fujiwara T."/>
            <person name="Ono T."/>
            <person name="Yamada K."/>
            <person name="Fujii Y."/>
            <person name="Ozaki K."/>
            <person name="Hirao M."/>
            <person name="Ohmori Y."/>
            <person name="Kawabata A."/>
            <person name="Hikiji T."/>
            <person name="Kobatake N."/>
            <person name="Inagaki H."/>
            <person name="Ikema Y."/>
            <person name="Okamoto S."/>
            <person name="Okitani R."/>
            <person name="Kawakami T."/>
            <person name="Noguchi S."/>
            <person name="Itoh T."/>
            <person name="Shigeta K."/>
            <person name="Senba T."/>
            <person name="Matsumura K."/>
            <person name="Nakajima Y."/>
            <person name="Mizuno T."/>
            <person name="Morinaga M."/>
            <person name="Sasaki M."/>
            <person name="Togashi T."/>
            <person name="Oyama M."/>
            <person name="Hata H."/>
            <person name="Watanabe M."/>
            <person name="Komatsu T."/>
            <person name="Mizushima-Sugano J."/>
            <person name="Satoh T."/>
            <person name="Shirai Y."/>
            <person name="Takahashi Y."/>
            <person name="Nakagawa K."/>
            <person name="Okumura K."/>
            <person name="Nagase T."/>
            <person name="Nomura N."/>
            <person name="Kikuchi H."/>
            <person name="Masuho Y."/>
            <person name="Yamashita R."/>
            <person name="Nakai K."/>
            <person name="Yada T."/>
            <person name="Nakamura Y."/>
            <person name="Ohara O."/>
            <person name="Isogai T."/>
            <person name="Sugano S."/>
        </authorList>
    </citation>
    <scope>NUCLEOTIDE SEQUENCE [LARGE SCALE MRNA]</scope>
    <source>
        <tissue>Embryo</tissue>
        <tissue>Ileal mucosa</tissue>
        <tissue>Trachea</tissue>
    </source>
</reference>
<reference key="2">
    <citation type="journal article" date="2007" name="BMC Genomics">
        <title>The full-ORF clone resource of the German cDNA consortium.</title>
        <authorList>
            <person name="Bechtel S."/>
            <person name="Rosenfelder H."/>
            <person name="Duda A."/>
            <person name="Schmidt C.P."/>
            <person name="Ernst U."/>
            <person name="Wellenreuther R."/>
            <person name="Mehrle A."/>
            <person name="Schuster C."/>
            <person name="Bahr A."/>
            <person name="Bloecker H."/>
            <person name="Heubner D."/>
            <person name="Hoerlein A."/>
            <person name="Michel G."/>
            <person name="Wedler H."/>
            <person name="Koehrer K."/>
            <person name="Ottenwaelder B."/>
            <person name="Poustka A."/>
            <person name="Wiemann S."/>
            <person name="Schupp I."/>
        </authorList>
    </citation>
    <scope>NUCLEOTIDE SEQUENCE [LARGE SCALE MRNA]</scope>
    <source>
        <tissue>Fetal brain</tissue>
        <tissue>Fetal kidney</tissue>
    </source>
</reference>
<reference key="3">
    <citation type="journal article" date="2004" name="Nature">
        <title>The DNA sequence and analysis of human chromosome 13.</title>
        <authorList>
            <person name="Dunham A."/>
            <person name="Matthews L.H."/>
            <person name="Burton J."/>
            <person name="Ashurst J.L."/>
            <person name="Howe K.L."/>
            <person name="Ashcroft K.J."/>
            <person name="Beare D.M."/>
            <person name="Burford D.C."/>
            <person name="Hunt S.E."/>
            <person name="Griffiths-Jones S."/>
            <person name="Jones M.C."/>
            <person name="Keenan S.J."/>
            <person name="Oliver K."/>
            <person name="Scott C.E."/>
            <person name="Ainscough R."/>
            <person name="Almeida J.P."/>
            <person name="Ambrose K.D."/>
            <person name="Andrews D.T."/>
            <person name="Ashwell R.I.S."/>
            <person name="Babbage A.K."/>
            <person name="Bagguley C.L."/>
            <person name="Bailey J."/>
            <person name="Bannerjee R."/>
            <person name="Barlow K.F."/>
            <person name="Bates K."/>
            <person name="Beasley H."/>
            <person name="Bird C.P."/>
            <person name="Bray-Allen S."/>
            <person name="Brown A.J."/>
            <person name="Brown J.Y."/>
            <person name="Burrill W."/>
            <person name="Carder C."/>
            <person name="Carter N.P."/>
            <person name="Chapman J.C."/>
            <person name="Clamp M.E."/>
            <person name="Clark S.Y."/>
            <person name="Clarke G."/>
            <person name="Clee C.M."/>
            <person name="Clegg S.C."/>
            <person name="Cobley V."/>
            <person name="Collins J.E."/>
            <person name="Corby N."/>
            <person name="Coville G.J."/>
            <person name="Deloukas P."/>
            <person name="Dhami P."/>
            <person name="Dunham I."/>
            <person name="Dunn M."/>
            <person name="Earthrowl M.E."/>
            <person name="Ellington A.G."/>
            <person name="Faulkner L."/>
            <person name="Frankish A.G."/>
            <person name="Frankland J."/>
            <person name="French L."/>
            <person name="Garner P."/>
            <person name="Garnett J."/>
            <person name="Gilbert J.G.R."/>
            <person name="Gilson C.J."/>
            <person name="Ghori J."/>
            <person name="Grafham D.V."/>
            <person name="Gribble S.M."/>
            <person name="Griffiths C."/>
            <person name="Hall R.E."/>
            <person name="Hammond S."/>
            <person name="Harley J.L."/>
            <person name="Hart E.A."/>
            <person name="Heath P.D."/>
            <person name="Howden P.J."/>
            <person name="Huckle E.J."/>
            <person name="Hunt P.J."/>
            <person name="Hunt A.R."/>
            <person name="Johnson C."/>
            <person name="Johnson D."/>
            <person name="Kay M."/>
            <person name="Kimberley A.M."/>
            <person name="King A."/>
            <person name="Laird G.K."/>
            <person name="Langford C.J."/>
            <person name="Lawlor S."/>
            <person name="Leongamornlert D.A."/>
            <person name="Lloyd D.M."/>
            <person name="Lloyd C."/>
            <person name="Loveland J.E."/>
            <person name="Lovell J."/>
            <person name="Martin S."/>
            <person name="Mashreghi-Mohammadi M."/>
            <person name="McLaren S.J."/>
            <person name="McMurray A."/>
            <person name="Milne S."/>
            <person name="Moore M.J.F."/>
            <person name="Nickerson T."/>
            <person name="Palmer S.A."/>
            <person name="Pearce A.V."/>
            <person name="Peck A.I."/>
            <person name="Pelan S."/>
            <person name="Phillimore B."/>
            <person name="Porter K.M."/>
            <person name="Rice C.M."/>
            <person name="Searle S."/>
            <person name="Sehra H.K."/>
            <person name="Shownkeen R."/>
            <person name="Skuce C.D."/>
            <person name="Smith M."/>
            <person name="Steward C.A."/>
            <person name="Sycamore N."/>
            <person name="Tester J."/>
            <person name="Thomas D.W."/>
            <person name="Tracey A."/>
            <person name="Tromans A."/>
            <person name="Tubby B."/>
            <person name="Wall M."/>
            <person name="Wallis J.M."/>
            <person name="West A.P."/>
            <person name="Whitehead S.L."/>
            <person name="Willey D.L."/>
            <person name="Wilming L."/>
            <person name="Wray P.W."/>
            <person name="Wright M.W."/>
            <person name="Young L."/>
            <person name="Coulson A."/>
            <person name="Durbin R.M."/>
            <person name="Hubbard T."/>
            <person name="Sulston J.E."/>
            <person name="Beck S."/>
            <person name="Bentley D.R."/>
            <person name="Rogers J."/>
            <person name="Ross M.T."/>
        </authorList>
    </citation>
    <scope>NUCLEOTIDE SEQUENCE [LARGE SCALE GENOMIC DNA]</scope>
</reference>
<reference key="4">
    <citation type="submission" date="2005-07" db="EMBL/GenBank/DDBJ databases">
        <authorList>
            <person name="Mural R.J."/>
            <person name="Istrail S."/>
            <person name="Sutton G.G."/>
            <person name="Florea L."/>
            <person name="Halpern A.L."/>
            <person name="Mobarry C.M."/>
            <person name="Lippert R."/>
            <person name="Walenz B."/>
            <person name="Shatkay H."/>
            <person name="Dew I."/>
            <person name="Miller J.R."/>
            <person name="Flanigan M.J."/>
            <person name="Edwards N.J."/>
            <person name="Bolanos R."/>
            <person name="Fasulo D."/>
            <person name="Halldorsson B.V."/>
            <person name="Hannenhalli S."/>
            <person name="Turner R."/>
            <person name="Yooseph S."/>
            <person name="Lu F."/>
            <person name="Nusskern D.R."/>
            <person name="Shue B.C."/>
            <person name="Zheng X.H."/>
            <person name="Zhong F."/>
            <person name="Delcher A.L."/>
            <person name="Huson D.H."/>
            <person name="Kravitz S.A."/>
            <person name="Mouchard L."/>
            <person name="Reinert K."/>
            <person name="Remington K.A."/>
            <person name="Clark A.G."/>
            <person name="Waterman M.S."/>
            <person name="Eichler E.E."/>
            <person name="Adams M.D."/>
            <person name="Hunkapiller M.W."/>
            <person name="Myers E.W."/>
            <person name="Venter J.C."/>
        </authorList>
    </citation>
    <scope>NUCLEOTIDE SEQUENCE [LARGE SCALE GENOMIC DNA]</scope>
</reference>
<reference key="5">
    <citation type="journal article" date="2004" name="Genome Res.">
        <title>The status, quality, and expansion of the NIH full-length cDNA project: the Mammalian Gene Collection (MGC).</title>
        <authorList>
            <consortium name="The MGC Project Team"/>
        </authorList>
    </citation>
    <scope>NUCLEOTIDE SEQUENCE [LARGE SCALE MRNA]</scope>
</reference>
<reference evidence="5" key="6">
    <citation type="journal article" date="2003" name="Gene">
        <title>Human SLITRK family genes: genomic organization and expression profiling in normal brain and brain tumor tissue.</title>
        <authorList>
            <person name="Aruga J."/>
            <person name="Yokota N."/>
            <person name="Mikoshiba K."/>
        </authorList>
    </citation>
    <scope>IDENTIFICATION</scope>
    <scope>TISSUE SPECIFICITY</scope>
    <source>
        <tissue evidence="2">Brain</tissue>
        <tissue evidence="2">Brain tumor</tissue>
    </source>
</reference>
<reference key="7">
    <citation type="journal article" date="2013" name="J. Clin. Invest.">
        <title>SLITRK6 mutations cause myopia and deafness in humans and mice.</title>
        <authorList>
            <person name="Tekin M."/>
            <person name="Chioza B.A."/>
            <person name="Matsumoto Y."/>
            <person name="Diaz-Horta O."/>
            <person name="Cross H.E."/>
            <person name="Duman D."/>
            <person name="Kokotas H."/>
            <person name="Moore-Barton H.L."/>
            <person name="Sakoori K."/>
            <person name="Ota M."/>
            <person name="Odaka Y.S."/>
            <person name="Foster J. II"/>
            <person name="Cengiz F.B."/>
            <person name="Tokgoz-Yilmaz S."/>
            <person name="Tekeli O."/>
            <person name="Grigoriadou M."/>
            <person name="Petersen M.B."/>
            <person name="Sreekantan-Nair A."/>
            <person name="Gurtz K."/>
            <person name="Xia X.J."/>
            <person name="Pandya A."/>
            <person name="Patton M.A."/>
            <person name="Young J.I."/>
            <person name="Aruga J."/>
            <person name="Crosby A.H."/>
        </authorList>
    </citation>
    <scope>INVOLVEMENT IN DFNMYP</scope>
    <scope>SUBCELLULAR LOCATION</scope>
    <scope>FUNCTION</scope>
</reference>
<reference key="8">
    <citation type="journal article" date="2014" name="Laryngoscope">
        <title>A homozygous SLITRK6 nonsense mutation is associated with progressive auditory neuropathy in humans.</title>
        <authorList>
            <person name="Morlet T."/>
            <person name="Rabinowitz M.R."/>
            <person name="Looney L.R."/>
            <person name="Riegner T."/>
            <person name="Greenwood L.A."/>
            <person name="Sherman E.A."/>
            <person name="Achilly N."/>
            <person name="Zhu A."/>
            <person name="Yoo E."/>
            <person name="O'Reilly R.C."/>
            <person name="Jinks R.N."/>
            <person name="Puffenberger E.G."/>
            <person name="Heaps A."/>
            <person name="Morton H."/>
            <person name="Strauss K.A."/>
        </authorList>
    </citation>
    <scope>INVOLVEMENT IN DFNMYP</scope>
    <scope>SUBCELLULAR LOCATION</scope>
</reference>
<dbReference type="EMBL" id="AK021931">
    <property type="protein sequence ID" value="BAB13941.1"/>
    <property type="status" value="ALT_SEQ"/>
    <property type="molecule type" value="mRNA"/>
</dbReference>
<dbReference type="EMBL" id="AK026427">
    <property type="protein sequence ID" value="BAB15480.1"/>
    <property type="status" value="ALT_SEQ"/>
    <property type="molecule type" value="mRNA"/>
</dbReference>
<dbReference type="EMBL" id="AK292793">
    <property type="protein sequence ID" value="BAF85482.1"/>
    <property type="molecule type" value="mRNA"/>
</dbReference>
<dbReference type="EMBL" id="AL137517">
    <property type="protein sequence ID" value="CAB70783.3"/>
    <property type="molecule type" value="mRNA"/>
</dbReference>
<dbReference type="EMBL" id="BX648640">
    <property type="protein sequence ID" value="CAH10557.1"/>
    <property type="molecule type" value="mRNA"/>
</dbReference>
<dbReference type="EMBL" id="AL162373">
    <property type="status" value="NOT_ANNOTATED_CDS"/>
    <property type="molecule type" value="Genomic_DNA"/>
</dbReference>
<dbReference type="EMBL" id="CH471093">
    <property type="protein sequence ID" value="EAW80611.1"/>
    <property type="molecule type" value="Genomic_DNA"/>
</dbReference>
<dbReference type="EMBL" id="BC101070">
    <property type="protein sequence ID" value="AAI01071.1"/>
    <property type="molecule type" value="mRNA"/>
</dbReference>
<dbReference type="EMBL" id="BC101071">
    <property type="protein sequence ID" value="AAI01072.1"/>
    <property type="molecule type" value="mRNA"/>
</dbReference>
<dbReference type="EMBL" id="BC101072">
    <property type="protein sequence ID" value="AAI01073.1"/>
    <property type="molecule type" value="mRNA"/>
</dbReference>
<dbReference type="EMBL" id="BC101073">
    <property type="protein sequence ID" value="AAI01074.1"/>
    <property type="molecule type" value="mRNA"/>
</dbReference>
<dbReference type="CCDS" id="CCDS41903.1"/>
<dbReference type="PIR" id="T46279">
    <property type="entry name" value="T46279"/>
</dbReference>
<dbReference type="RefSeq" id="NP_115605.2">
    <property type="nucleotide sequence ID" value="NM_032229.2"/>
</dbReference>
<dbReference type="SMR" id="Q9H5Y7"/>
<dbReference type="BioGRID" id="123937">
    <property type="interactions" value="12"/>
</dbReference>
<dbReference type="FunCoup" id="Q9H5Y7">
    <property type="interactions" value="240"/>
</dbReference>
<dbReference type="IntAct" id="Q9H5Y7">
    <property type="interactions" value="32"/>
</dbReference>
<dbReference type="STRING" id="9606.ENSP00000495507"/>
<dbReference type="GlyGen" id="Q9H5Y7">
    <property type="glycosylation" value="5 sites, 1 O-linked glycan (3 sites)"/>
</dbReference>
<dbReference type="iPTMnet" id="Q9H5Y7"/>
<dbReference type="PhosphoSitePlus" id="Q9H5Y7"/>
<dbReference type="SwissPalm" id="Q9H5Y7"/>
<dbReference type="BioMuta" id="SLITRK6"/>
<dbReference type="DMDM" id="59803110"/>
<dbReference type="jPOST" id="Q9H5Y7"/>
<dbReference type="MassIVE" id="Q9H5Y7"/>
<dbReference type="PaxDb" id="9606-ENSP00000383143"/>
<dbReference type="PeptideAtlas" id="Q9H5Y7"/>
<dbReference type="ProteomicsDB" id="80941"/>
<dbReference type="ABCD" id="Q9H5Y7">
    <property type="antibodies" value="1 sequenced antibody"/>
</dbReference>
<dbReference type="Antibodypedia" id="24756">
    <property type="antibodies" value="260 antibodies from 32 providers"/>
</dbReference>
<dbReference type="DNASU" id="84189"/>
<dbReference type="Ensembl" id="ENST00000643778.1">
    <property type="protein sequence ID" value="ENSP00000496428.1"/>
    <property type="gene ID" value="ENSG00000184564.11"/>
</dbReference>
<dbReference type="Ensembl" id="ENST00000647374.2">
    <property type="protein sequence ID" value="ENSP00000495507.1"/>
    <property type="gene ID" value="ENSG00000184564.11"/>
</dbReference>
<dbReference type="GeneID" id="84189"/>
<dbReference type="KEGG" id="hsa:84189"/>
<dbReference type="MANE-Select" id="ENST00000647374.2">
    <property type="protein sequence ID" value="ENSP00000495507.1"/>
    <property type="RefSeq nucleotide sequence ID" value="NM_032229.3"/>
    <property type="RefSeq protein sequence ID" value="NP_115605.2"/>
</dbReference>
<dbReference type="UCSC" id="uc001vll.2">
    <property type="organism name" value="human"/>
</dbReference>
<dbReference type="AGR" id="HGNC:23503"/>
<dbReference type="CTD" id="84189"/>
<dbReference type="DisGeNET" id="84189"/>
<dbReference type="GeneCards" id="SLITRK6"/>
<dbReference type="GeneReviews" id="SLITRK6"/>
<dbReference type="HGNC" id="HGNC:23503">
    <property type="gene designation" value="SLITRK6"/>
</dbReference>
<dbReference type="HPA" id="ENSG00000184564">
    <property type="expression patterns" value="Tissue enhanced (salivary gland, urinary bladder)"/>
</dbReference>
<dbReference type="MalaCards" id="SLITRK6"/>
<dbReference type="MIM" id="221200">
    <property type="type" value="phenotype"/>
</dbReference>
<dbReference type="MIM" id="609681">
    <property type="type" value="gene"/>
</dbReference>
<dbReference type="neXtProt" id="NX_Q9H5Y7"/>
<dbReference type="OpenTargets" id="ENSG00000184564"/>
<dbReference type="Orphanet" id="363396">
    <property type="disease" value="High myopia-sensorineural deafness syndrome"/>
</dbReference>
<dbReference type="Orphanet" id="90636">
    <property type="disease" value="Rare autosomal recessive non-syndromic sensorineural deafness type DFNB"/>
</dbReference>
<dbReference type="PharmGKB" id="PA134928433"/>
<dbReference type="VEuPathDB" id="HostDB:ENSG00000184564"/>
<dbReference type="eggNOG" id="ENOG502QZTX">
    <property type="taxonomic scope" value="Eukaryota"/>
</dbReference>
<dbReference type="GeneTree" id="ENSGT00940000160718"/>
<dbReference type="HOGENOM" id="CLU_012706_1_0_1"/>
<dbReference type="InParanoid" id="Q9H5Y7"/>
<dbReference type="OMA" id="IIGDIVC"/>
<dbReference type="OrthoDB" id="676979at2759"/>
<dbReference type="PAN-GO" id="Q9H5Y7">
    <property type="GO annotations" value="3 GO annotations based on evolutionary models"/>
</dbReference>
<dbReference type="PhylomeDB" id="Q9H5Y7"/>
<dbReference type="TreeFam" id="TF326378"/>
<dbReference type="PathwayCommons" id="Q9H5Y7"/>
<dbReference type="Reactome" id="R-HSA-388844">
    <property type="pathway name" value="Receptor-type tyrosine-protein phosphatases"/>
</dbReference>
<dbReference type="SignaLink" id="Q9H5Y7"/>
<dbReference type="BioGRID-ORCS" id="84189">
    <property type="hits" value="11 hits in 1145 CRISPR screens"/>
</dbReference>
<dbReference type="GeneWiki" id="SLITRK6"/>
<dbReference type="GenomeRNAi" id="84189"/>
<dbReference type="Pharos" id="Q9H5Y7">
    <property type="development level" value="Tbio"/>
</dbReference>
<dbReference type="PRO" id="PR:Q9H5Y7"/>
<dbReference type="Proteomes" id="UP000005640">
    <property type="component" value="Chromosome 13"/>
</dbReference>
<dbReference type="RNAct" id="Q9H5Y7">
    <property type="molecule type" value="protein"/>
</dbReference>
<dbReference type="Bgee" id="ENSG00000184564">
    <property type="expression patterns" value="Expressed in bronchial epithelial cell and 144 other cell types or tissues"/>
</dbReference>
<dbReference type="GO" id="GO:0009986">
    <property type="term" value="C:cell surface"/>
    <property type="evidence" value="ECO:0000314"/>
    <property type="project" value="MGI"/>
</dbReference>
<dbReference type="GO" id="GO:0005886">
    <property type="term" value="C:plasma membrane"/>
    <property type="evidence" value="ECO:0000314"/>
    <property type="project" value="UniProtKB"/>
</dbReference>
<dbReference type="GO" id="GO:0008344">
    <property type="term" value="P:adult locomotory behavior"/>
    <property type="evidence" value="ECO:0007669"/>
    <property type="project" value="Ensembl"/>
</dbReference>
<dbReference type="GO" id="GO:0031223">
    <property type="term" value="P:auditory behavior"/>
    <property type="evidence" value="ECO:0007669"/>
    <property type="project" value="Ensembl"/>
</dbReference>
<dbReference type="GO" id="GO:0002093">
    <property type="term" value="P:auditory receptor cell morphogenesis"/>
    <property type="evidence" value="ECO:0007669"/>
    <property type="project" value="Ensembl"/>
</dbReference>
<dbReference type="GO" id="GO:0007409">
    <property type="term" value="P:axonogenesis"/>
    <property type="evidence" value="ECO:0000318"/>
    <property type="project" value="GO_Central"/>
</dbReference>
<dbReference type="GO" id="GO:0090102">
    <property type="term" value="P:cochlea development"/>
    <property type="evidence" value="ECO:0007669"/>
    <property type="project" value="Ensembl"/>
</dbReference>
<dbReference type="GO" id="GO:0060384">
    <property type="term" value="P:innervation"/>
    <property type="evidence" value="ECO:0007669"/>
    <property type="project" value="Ensembl"/>
</dbReference>
<dbReference type="GO" id="GO:0002088">
    <property type="term" value="P:lens development in camera-type eye"/>
    <property type="evidence" value="ECO:0007669"/>
    <property type="project" value="Ensembl"/>
</dbReference>
<dbReference type="GO" id="GO:0060007">
    <property type="term" value="P:linear vestibuloocular reflex"/>
    <property type="evidence" value="ECO:0007669"/>
    <property type="project" value="Ensembl"/>
</dbReference>
<dbReference type="GO" id="GO:0035264">
    <property type="term" value="P:multicellular organism growth"/>
    <property type="evidence" value="ECO:0007669"/>
    <property type="project" value="Ensembl"/>
</dbReference>
<dbReference type="GO" id="GO:0051965">
    <property type="term" value="P:positive regulation of synapse assembly"/>
    <property type="evidence" value="ECO:0000318"/>
    <property type="project" value="GO_Central"/>
</dbReference>
<dbReference type="GO" id="GO:0007605">
    <property type="term" value="P:sensory perception of sound"/>
    <property type="evidence" value="ECO:0007669"/>
    <property type="project" value="UniProtKB-KW"/>
</dbReference>
<dbReference type="GO" id="GO:0001964">
    <property type="term" value="P:startle response"/>
    <property type="evidence" value="ECO:0007669"/>
    <property type="project" value="Ensembl"/>
</dbReference>
<dbReference type="GO" id="GO:0007416">
    <property type="term" value="P:synapse assembly"/>
    <property type="evidence" value="ECO:0000315"/>
    <property type="project" value="MGI"/>
</dbReference>
<dbReference type="GO" id="GO:0021562">
    <property type="term" value="P:vestibulocochlear nerve development"/>
    <property type="evidence" value="ECO:0007669"/>
    <property type="project" value="Ensembl"/>
</dbReference>
<dbReference type="GO" id="GO:0007601">
    <property type="term" value="P:visual perception"/>
    <property type="evidence" value="ECO:0007669"/>
    <property type="project" value="UniProtKB-KW"/>
</dbReference>
<dbReference type="FunFam" id="3.80.10.10:FF:000001">
    <property type="entry name" value="SLIT and NTRK-like family, member 1"/>
    <property type="match status" value="2"/>
</dbReference>
<dbReference type="Gene3D" id="3.80.10.10">
    <property type="entry name" value="Ribonuclease Inhibitor"/>
    <property type="match status" value="2"/>
</dbReference>
<dbReference type="InterPro" id="IPR000483">
    <property type="entry name" value="Cys-rich_flank_reg_C"/>
</dbReference>
<dbReference type="InterPro" id="IPR001611">
    <property type="entry name" value="Leu-rich_rpt"/>
</dbReference>
<dbReference type="InterPro" id="IPR003591">
    <property type="entry name" value="Leu-rich_rpt_typical-subtyp"/>
</dbReference>
<dbReference type="InterPro" id="IPR032675">
    <property type="entry name" value="LRR_dom_sf"/>
</dbReference>
<dbReference type="PANTHER" id="PTHR45773">
    <property type="entry name" value="SLIT AND NTRK-LIKE PROTEIN 4-RELATED"/>
    <property type="match status" value="1"/>
</dbReference>
<dbReference type="PANTHER" id="PTHR45773:SF1">
    <property type="entry name" value="SLIT AND NTRK-LIKE PROTEIN 6"/>
    <property type="match status" value="1"/>
</dbReference>
<dbReference type="Pfam" id="PF13855">
    <property type="entry name" value="LRR_8"/>
    <property type="match status" value="2"/>
</dbReference>
<dbReference type="SMART" id="SM00365">
    <property type="entry name" value="LRR_SD22"/>
    <property type="match status" value="7"/>
</dbReference>
<dbReference type="SMART" id="SM00369">
    <property type="entry name" value="LRR_TYP"/>
    <property type="match status" value="9"/>
</dbReference>
<dbReference type="SMART" id="SM00082">
    <property type="entry name" value="LRRCT"/>
    <property type="match status" value="2"/>
</dbReference>
<dbReference type="SUPFAM" id="SSF52058">
    <property type="entry name" value="L domain-like"/>
    <property type="match status" value="2"/>
</dbReference>
<dbReference type="PROSITE" id="PS51450">
    <property type="entry name" value="LRR"/>
    <property type="match status" value="9"/>
</dbReference>
<protein>
    <recommendedName>
        <fullName>SLIT and NTRK-like protein 6</fullName>
    </recommendedName>
</protein>
<name>SLIK6_HUMAN</name>
<proteinExistence type="evidence at protein level"/>
<feature type="signal peptide" evidence="1">
    <location>
        <begin position="1"/>
        <end position="26"/>
    </location>
</feature>
<feature type="chain" id="PRO_0000032683" description="SLIT and NTRK-like protein 6">
    <location>
        <begin position="27"/>
        <end position="841"/>
    </location>
</feature>
<feature type="topological domain" description="Extracellular" evidence="1">
    <location>
        <begin position="27"/>
        <end position="608"/>
    </location>
</feature>
<feature type="transmembrane region" description="Helical" evidence="1">
    <location>
        <begin position="609"/>
        <end position="629"/>
    </location>
</feature>
<feature type="topological domain" description="Cytoplasmic" evidence="1">
    <location>
        <begin position="630"/>
        <end position="841"/>
    </location>
</feature>
<feature type="domain" description="LRRNT 1">
    <location>
        <begin position="27"/>
        <end position="67"/>
    </location>
</feature>
<feature type="repeat" description="LRR 1">
    <location>
        <begin position="89"/>
        <end position="110"/>
    </location>
</feature>
<feature type="repeat" description="LRR 2">
    <location>
        <begin position="113"/>
        <end position="134"/>
    </location>
</feature>
<feature type="repeat" description="LRR 3">
    <location>
        <begin position="137"/>
        <end position="158"/>
    </location>
</feature>
<feature type="repeat" description="LRR 4">
    <location>
        <begin position="161"/>
        <end position="182"/>
    </location>
</feature>
<feature type="repeat" description="LRR 5">
    <location>
        <begin position="184"/>
        <end position="205"/>
    </location>
</feature>
<feature type="domain" description="LRRCT 1">
    <location>
        <begin position="218"/>
        <end position="269"/>
    </location>
</feature>
<feature type="domain" description="LRRNT 2">
    <location>
        <begin position="320"/>
        <end position="361"/>
    </location>
</feature>
<feature type="repeat" description="LRR 6">
    <location>
        <begin position="364"/>
        <end position="385"/>
    </location>
</feature>
<feature type="repeat" description="LRR 7">
    <location>
        <begin position="388"/>
        <end position="409"/>
    </location>
</feature>
<feature type="repeat" description="LRR 8">
    <location>
        <begin position="412"/>
        <end position="433"/>
    </location>
</feature>
<feature type="repeat" description="LRR 9">
    <location>
        <begin position="436"/>
        <end position="457"/>
    </location>
</feature>
<feature type="repeat" description="LRR 10">
    <location>
        <begin position="460"/>
        <end position="481"/>
    </location>
</feature>
<feature type="repeat" description="LRR 11">
    <location>
        <begin position="483"/>
        <end position="504"/>
    </location>
</feature>
<feature type="domain" description="LRRCT 2">
    <location>
        <begin position="517"/>
        <end position="568"/>
    </location>
</feature>
<feature type="sequence variant" id="VAR_027758" description="In dbSNP:rs12863734.">
    <original>L</original>
    <variation>F</variation>
    <location>
        <position position="25"/>
    </location>
</feature>
<feature type="sequence variant" id="VAR_027759" description="In dbSNP:rs9547378.">
    <original>P</original>
    <variation>R</variation>
    <location>
        <position position="315"/>
    </location>
</feature>
<feature type="sequence variant" id="VAR_027760" description="In dbSNP:rs17080147.">
    <original>Q</original>
    <variation>R</variation>
    <location>
        <position position="414"/>
    </location>
</feature>
<evidence type="ECO:0000255" key="1"/>
<evidence type="ECO:0000269" key="2">
    <source>
    </source>
</evidence>
<evidence type="ECO:0000269" key="3">
    <source>
    </source>
</evidence>
<evidence type="ECO:0000269" key="4">
    <source>
    </source>
</evidence>
<evidence type="ECO:0000305" key="5"/>
<evidence type="ECO:0000312" key="6">
    <source>
        <dbReference type="EMBL" id="BAB13941.1"/>
    </source>
</evidence>
<accession>Q9H5Y7</accession>
<accession>A8K9S8</accession>
<accession>Q495Q0</accession>
<accession>Q6AW93</accession>
<accession>Q9HAA8</accession>
<accession>Q9NT60</accession>
<keyword id="KW-1003">Cell membrane</keyword>
<keyword id="KW-0209">Deafness</keyword>
<keyword id="KW-1009">Hearing</keyword>
<keyword id="KW-0433">Leucine-rich repeat</keyword>
<keyword id="KW-0472">Membrane</keyword>
<keyword id="KW-1267">Proteomics identification</keyword>
<keyword id="KW-1185">Reference proteome</keyword>
<keyword id="KW-0677">Repeat</keyword>
<keyword id="KW-0716">Sensory transduction</keyword>
<keyword id="KW-0732">Signal</keyword>
<keyword id="KW-0812">Transmembrane</keyword>
<keyword id="KW-1133">Transmembrane helix</keyword>
<keyword id="KW-0844">Vision</keyword>
<comment type="function">
    <text evidence="3">Regulator of neurite outgrowth required for normal hearing and vision.</text>
</comment>
<comment type="subcellular location">
    <subcellularLocation>
        <location evidence="3 4">Cell membrane</location>
        <topology evidence="3 4">Single-pass type I membrane protein</topology>
    </subcellularLocation>
</comment>
<comment type="tissue specificity">
    <text evidence="2">In adult brain, highly expressed in putamen with no expression in cerebral cortex. Expressed in adult and fetal lung and fetal liver. Also expressed at high levels in some brain tumors including medulloblastomas and primitive neuroectodermal tumors.</text>
</comment>
<comment type="disease" evidence="3 4">
    <disease id="DI-03969">
        <name>Deafness and myopia</name>
        <acronym>DFNMYP</acronym>
        <description>An autosomal recessive disorder characterized by prelingual sensorineural hearing loss associated with high myopia.</description>
        <dbReference type="MIM" id="221200"/>
    </disease>
    <text>The disease is caused by variants affecting the gene represented in this entry.</text>
</comment>
<comment type="similarity">
    <text evidence="5">Belongs to the SLITRK family.</text>
</comment>
<comment type="sequence caution" evidence="5">
    <conflict type="erroneous initiation">
        <sequence resource="EMBL-CDS" id="BAB13941"/>
    </conflict>
    <text>Truncated N-terminus.</text>
</comment>
<comment type="sequence caution" evidence="5">
    <conflict type="miscellaneous discrepancy">
        <sequence resource="EMBL-CDS" id="BAB13941"/>
    </conflict>
    <text>Aberrant splicing.</text>
</comment>
<comment type="sequence caution" evidence="5">
    <conflict type="erroneous initiation">
        <sequence resource="EMBL-CDS" id="BAB15480"/>
    </conflict>
    <text>Truncated N-terminus.</text>
</comment>
<comment type="sequence caution" evidence="5">
    <conflict type="frameshift">
        <sequence resource="EMBL-CDS" id="BAB15480"/>
    </conflict>
</comment>
<sequence>MKLWIHLFYSSLLACISLHSQTPVLSSRGSCDSLCNCEEKDGTMLINCEAKGIKMVSEISVPPSRPFQLSLLNNGLTMLHTNDFSGLTNAISIHLGFNNIADIEIGAFNGLGLLKQLHINHNSLEILKEDTFHGLENLEFLQADNNFITVIEPSAFSKLNRLKVLILNDNAIESLPPNIFRFVPLTHLDLRGNQLQTLPYVGFLEHIGRILDLQLEDNKWACNCDLLQLKTWLENMPPQSIIGDVVCNSPPFFKGSILSRLKKESICPTPPVYEEHEDPSGSLHLAATSSINDSRMSTKTTSILKLPTKAPGLIPYITKPSTQLPGPYCPIPCNCKVLSPSGLLIHCQERNIESLSDLRPPPQNPRKLILAGNIIHSLMKSDLVEYFTLEMLHLGNNRIEVLEEGSFMNLTRLQKLYLNGNHLTKLSKGMFLGLHNLEYLYLEYNAIKEILPGTFNPMPKLKVLYLNNNLLQVLPPHIFSGVPLTKVNLKTNQFTHLPVSNILDDLDLLTQIDLEDNPWDCSCDLVGLQQWIQKLSKNTVTDDILCTSPGHLDKKELKALNSEILCPGLVNNPSMPTQTSYLMVTTPATTTNTADTILRSLTDAVPLSVLILGLLIMFITIVFCAAGIVVLVLHRRRRYKKKQVDEQMRDNSPVHLQYSMYGHKTTHHTTERPSASLYEQHMVSPMVHVYRSPSFGPKHLEEEEERNEKEGSDAKHLQRSLLEQENHSPLTGSNMKYKTTNQSTEFLSFQDASSLYRNILEKERELQQLGITEYLRKNIAQLQPDMEAHYPGAHEELKLMETLMYSRPRKVLVEQTKNEYFELKANLHAEPDYLEVLEQQT</sequence>